<gene>
    <name type="primary">Crabp1</name>
</gene>
<organism>
    <name type="scientific">Rattus norvegicus</name>
    <name type="common">Rat</name>
    <dbReference type="NCBI Taxonomy" id="10116"/>
    <lineage>
        <taxon>Eukaryota</taxon>
        <taxon>Metazoa</taxon>
        <taxon>Chordata</taxon>
        <taxon>Craniata</taxon>
        <taxon>Vertebrata</taxon>
        <taxon>Euteleostomi</taxon>
        <taxon>Mammalia</taxon>
        <taxon>Eutheria</taxon>
        <taxon>Euarchontoglires</taxon>
        <taxon>Glires</taxon>
        <taxon>Rodentia</taxon>
        <taxon>Myomorpha</taxon>
        <taxon>Muroidea</taxon>
        <taxon>Muridae</taxon>
        <taxon>Murinae</taxon>
        <taxon>Rattus</taxon>
    </lineage>
</organism>
<evidence type="ECO:0000250" key="1"/>
<evidence type="ECO:0000269" key="2">
    <source>
    </source>
</evidence>
<evidence type="ECO:0000305" key="3"/>
<reference key="1">
    <citation type="journal article" date="2004" name="Nature">
        <title>Genome sequence of the Brown Norway rat yields insights into mammalian evolution.</title>
        <authorList>
            <person name="Gibbs R.A."/>
            <person name="Weinstock G.M."/>
            <person name="Metzker M.L."/>
            <person name="Muzny D.M."/>
            <person name="Sodergren E.J."/>
            <person name="Scherer S."/>
            <person name="Scott G."/>
            <person name="Steffen D."/>
            <person name="Worley K.C."/>
            <person name="Burch P.E."/>
            <person name="Okwuonu G."/>
            <person name="Hines S."/>
            <person name="Lewis L."/>
            <person name="Deramo C."/>
            <person name="Delgado O."/>
            <person name="Dugan-Rocha S."/>
            <person name="Miner G."/>
            <person name="Morgan M."/>
            <person name="Hawes A."/>
            <person name="Gill R."/>
            <person name="Holt R.A."/>
            <person name="Adams M.D."/>
            <person name="Amanatides P.G."/>
            <person name="Baden-Tillson H."/>
            <person name="Barnstead M."/>
            <person name="Chin S."/>
            <person name="Evans C.A."/>
            <person name="Ferriera S."/>
            <person name="Fosler C."/>
            <person name="Glodek A."/>
            <person name="Gu Z."/>
            <person name="Jennings D."/>
            <person name="Kraft C.L."/>
            <person name="Nguyen T."/>
            <person name="Pfannkoch C.M."/>
            <person name="Sitter C."/>
            <person name="Sutton G.G."/>
            <person name="Venter J.C."/>
            <person name="Woodage T."/>
            <person name="Smith D."/>
            <person name="Lee H.-M."/>
            <person name="Gustafson E."/>
            <person name="Cahill P."/>
            <person name="Kana A."/>
            <person name="Doucette-Stamm L."/>
            <person name="Weinstock K."/>
            <person name="Fechtel K."/>
            <person name="Weiss R.B."/>
            <person name="Dunn D.M."/>
            <person name="Green E.D."/>
            <person name="Blakesley R.W."/>
            <person name="Bouffard G.G."/>
            <person name="De Jong P.J."/>
            <person name="Osoegawa K."/>
            <person name="Zhu B."/>
            <person name="Marra M."/>
            <person name="Schein J."/>
            <person name="Bosdet I."/>
            <person name="Fjell C."/>
            <person name="Jones S."/>
            <person name="Krzywinski M."/>
            <person name="Mathewson C."/>
            <person name="Siddiqui A."/>
            <person name="Wye N."/>
            <person name="McPherson J."/>
            <person name="Zhao S."/>
            <person name="Fraser C.M."/>
            <person name="Shetty J."/>
            <person name="Shatsman S."/>
            <person name="Geer K."/>
            <person name="Chen Y."/>
            <person name="Abramzon S."/>
            <person name="Nierman W.C."/>
            <person name="Havlak P.H."/>
            <person name="Chen R."/>
            <person name="Durbin K.J."/>
            <person name="Egan A."/>
            <person name="Ren Y."/>
            <person name="Song X.-Z."/>
            <person name="Li B."/>
            <person name="Liu Y."/>
            <person name="Qin X."/>
            <person name="Cawley S."/>
            <person name="Cooney A.J."/>
            <person name="D'Souza L.M."/>
            <person name="Martin K."/>
            <person name="Wu J.Q."/>
            <person name="Gonzalez-Garay M.L."/>
            <person name="Jackson A.R."/>
            <person name="Kalafus K.J."/>
            <person name="McLeod M.P."/>
            <person name="Milosavljevic A."/>
            <person name="Virk D."/>
            <person name="Volkov A."/>
            <person name="Wheeler D.A."/>
            <person name="Zhang Z."/>
            <person name="Bailey J.A."/>
            <person name="Eichler E.E."/>
            <person name="Tuzun E."/>
            <person name="Birney E."/>
            <person name="Mongin E."/>
            <person name="Ureta-Vidal A."/>
            <person name="Woodwark C."/>
            <person name="Zdobnov E."/>
            <person name="Bork P."/>
            <person name="Suyama M."/>
            <person name="Torrents D."/>
            <person name="Alexandersson M."/>
            <person name="Trask B.J."/>
            <person name="Young J.M."/>
            <person name="Huang H."/>
            <person name="Wang H."/>
            <person name="Xing H."/>
            <person name="Daniels S."/>
            <person name="Gietzen D."/>
            <person name="Schmidt J."/>
            <person name="Stevens K."/>
            <person name="Vitt U."/>
            <person name="Wingrove J."/>
            <person name="Camara F."/>
            <person name="Mar Alba M."/>
            <person name="Abril J.F."/>
            <person name="Guigo R."/>
            <person name="Smit A."/>
            <person name="Dubchak I."/>
            <person name="Rubin E.M."/>
            <person name="Couronne O."/>
            <person name="Poliakov A."/>
            <person name="Huebner N."/>
            <person name="Ganten D."/>
            <person name="Goesele C."/>
            <person name="Hummel O."/>
            <person name="Kreitler T."/>
            <person name="Lee Y.-A."/>
            <person name="Monti J."/>
            <person name="Schulz H."/>
            <person name="Zimdahl H."/>
            <person name="Himmelbauer H."/>
            <person name="Lehrach H."/>
            <person name="Jacob H.J."/>
            <person name="Bromberg S."/>
            <person name="Gullings-Handley J."/>
            <person name="Jensen-Seaman M.I."/>
            <person name="Kwitek A.E."/>
            <person name="Lazar J."/>
            <person name="Pasko D."/>
            <person name="Tonellato P.J."/>
            <person name="Twigger S."/>
            <person name="Ponting C.P."/>
            <person name="Duarte J.M."/>
            <person name="Rice S."/>
            <person name="Goodstadt L."/>
            <person name="Beatson S.A."/>
            <person name="Emes R.D."/>
            <person name="Winter E.E."/>
            <person name="Webber C."/>
            <person name="Brandt P."/>
            <person name="Nyakatura G."/>
            <person name="Adetobi M."/>
            <person name="Chiaromonte F."/>
            <person name="Elnitski L."/>
            <person name="Eswara P."/>
            <person name="Hardison R.C."/>
            <person name="Hou M."/>
            <person name="Kolbe D."/>
            <person name="Makova K."/>
            <person name="Miller W."/>
            <person name="Nekrutenko A."/>
            <person name="Riemer C."/>
            <person name="Schwartz S."/>
            <person name="Taylor J."/>
            <person name="Yang S."/>
            <person name="Zhang Y."/>
            <person name="Lindpaintner K."/>
            <person name="Andrews T.D."/>
            <person name="Caccamo M."/>
            <person name="Clamp M."/>
            <person name="Clarke L."/>
            <person name="Curwen V."/>
            <person name="Durbin R.M."/>
            <person name="Eyras E."/>
            <person name="Searle S.M."/>
            <person name="Cooper G.M."/>
            <person name="Batzoglou S."/>
            <person name="Brudno M."/>
            <person name="Sidow A."/>
            <person name="Stone E.A."/>
            <person name="Payseur B.A."/>
            <person name="Bourque G."/>
            <person name="Lopez-Otin C."/>
            <person name="Puente X.S."/>
            <person name="Chakrabarti K."/>
            <person name="Chatterji S."/>
            <person name="Dewey C."/>
            <person name="Pachter L."/>
            <person name="Bray N."/>
            <person name="Yap V.B."/>
            <person name="Caspi A."/>
            <person name="Tesler G."/>
            <person name="Pevzner P.A."/>
            <person name="Haussler D."/>
            <person name="Roskin K.M."/>
            <person name="Baertsch R."/>
            <person name="Clawson H."/>
            <person name="Furey T.S."/>
            <person name="Hinrichs A.S."/>
            <person name="Karolchik D."/>
            <person name="Kent W.J."/>
            <person name="Rosenbloom K.R."/>
            <person name="Trumbower H."/>
            <person name="Weirauch M."/>
            <person name="Cooper D.N."/>
            <person name="Stenson P.D."/>
            <person name="Ma B."/>
            <person name="Brent M."/>
            <person name="Arumugam M."/>
            <person name="Shteynberg D."/>
            <person name="Copley R.R."/>
            <person name="Taylor M.S."/>
            <person name="Riethman H."/>
            <person name="Mudunuri U."/>
            <person name="Peterson J."/>
            <person name="Guyer M."/>
            <person name="Felsenfeld A."/>
            <person name="Old S."/>
            <person name="Mockrin S."/>
            <person name="Collins F.S."/>
        </authorList>
    </citation>
    <scope>NUCLEOTIDE SEQUENCE [LARGE SCALE GENOMIC DNA]</scope>
    <source>
        <strain>Brown Norway</strain>
    </source>
</reference>
<reference key="2">
    <citation type="journal article" date="1981" name="FEBS Lett.">
        <title>The NH2-terminal amino acid sequence of cellular retinoic-acid binding protein from rat testis.</title>
        <authorList>
            <person name="Eriksson U."/>
            <person name="Sundelin J."/>
            <person name="Rask L."/>
            <person name="Peterson P.A."/>
        </authorList>
    </citation>
    <scope>PROTEIN SEQUENCE OF 2-34</scope>
    <source>
        <tissue>Testis</tissue>
    </source>
</reference>
<comment type="function">
    <text>Cytosolic CRABPs may regulate the access of retinoic acid to the nuclear retinoic acid receptors.</text>
</comment>
<comment type="subcellular location">
    <subcellularLocation>
        <location>Cytoplasm</location>
    </subcellularLocation>
</comment>
<comment type="domain">
    <text evidence="1">Forms a beta-barrel structure that accommodates hydrophobic ligands in its interior.</text>
</comment>
<comment type="similarity">
    <text evidence="3">Belongs to the calycin superfamily. Fatty-acid binding protein (FABP) family.</text>
</comment>
<sequence length="137" mass="15592">MPNFAGTWKMRSSENFDELLKALGVNAMLRKVAVAAASKPHVEIRQDGDQFYIKTSTTVRTTEINFKVGEGFEEETVDGRKCRSLPTWENENKIHCTQTLLEGDGPKTYWTRELANDELILTFGADDVVCTRIYVRE</sequence>
<protein>
    <recommendedName>
        <fullName>Cellular retinoic acid-binding protein 1</fullName>
    </recommendedName>
    <alternativeName>
        <fullName>Cellular retinoic acid-binding protein I</fullName>
        <shortName>CRABP-I</shortName>
    </alternativeName>
</protein>
<feature type="initiator methionine" description="Removed" evidence="2">
    <location>
        <position position="1"/>
    </location>
</feature>
<feature type="chain" id="PRO_0000067408" description="Cellular retinoic acid-binding protein 1">
    <location>
        <begin position="2"/>
        <end position="137"/>
    </location>
</feature>
<feature type="short sequence motif" description="Nuclear localization signal" evidence="1">
    <location>
        <begin position="21"/>
        <end position="31"/>
    </location>
</feature>
<feature type="binding site" evidence="1">
    <location>
        <begin position="132"/>
        <end position="134"/>
    </location>
    <ligand>
        <name>all-trans-retinoate</name>
        <dbReference type="ChEBI" id="CHEBI:35291"/>
    </ligand>
</feature>
<dbReference type="EMBL" id="AC094775">
    <property type="status" value="NOT_ANNOTATED_CDS"/>
    <property type="molecule type" value="Genomic_DNA"/>
</dbReference>
<dbReference type="PIR" id="A03150">
    <property type="entry name" value="A03150"/>
</dbReference>
<dbReference type="RefSeq" id="NP_001099186.1">
    <property type="nucleotide sequence ID" value="NM_001105716.1"/>
</dbReference>
<dbReference type="BMRB" id="P62966"/>
<dbReference type="SMR" id="P62966"/>
<dbReference type="FunCoup" id="P62966">
    <property type="interactions" value="32"/>
</dbReference>
<dbReference type="STRING" id="10116.ENSRNOP00000033840"/>
<dbReference type="iPTMnet" id="P62966"/>
<dbReference type="PhosphoSitePlus" id="P62966"/>
<dbReference type="PaxDb" id="10116-ENSRNOP00000033840"/>
<dbReference type="Ensembl" id="ENSRNOT00000031175.5">
    <property type="protein sequence ID" value="ENSRNOP00000033840.3"/>
    <property type="gene ID" value="ENSRNOG00000023633.5"/>
</dbReference>
<dbReference type="GeneID" id="25061"/>
<dbReference type="KEGG" id="rno:25061"/>
<dbReference type="UCSC" id="RGD:2400">
    <property type="organism name" value="rat"/>
</dbReference>
<dbReference type="AGR" id="RGD:2400"/>
<dbReference type="CTD" id="1381"/>
<dbReference type="RGD" id="2400">
    <property type="gene designation" value="Crabp1"/>
</dbReference>
<dbReference type="eggNOG" id="KOG4015">
    <property type="taxonomic scope" value="Eukaryota"/>
</dbReference>
<dbReference type="GeneTree" id="ENSGT00940000159422"/>
<dbReference type="HOGENOM" id="CLU_113772_0_2_1"/>
<dbReference type="InParanoid" id="P62966"/>
<dbReference type="OrthoDB" id="3393at9989"/>
<dbReference type="PhylomeDB" id="P62966"/>
<dbReference type="TreeFam" id="TF316894"/>
<dbReference type="Reactome" id="R-RNO-5365859">
    <property type="pathway name" value="RA biosynthesis pathway"/>
</dbReference>
<dbReference type="PRO" id="PR:P62966"/>
<dbReference type="Proteomes" id="UP000002494">
    <property type="component" value="Chromosome 8"/>
</dbReference>
<dbReference type="Bgee" id="ENSRNOG00000023633">
    <property type="expression patterns" value="Expressed in colon and 15 other cell types or tissues"/>
</dbReference>
<dbReference type="GO" id="GO:0005737">
    <property type="term" value="C:cytoplasm"/>
    <property type="evidence" value="ECO:0000266"/>
    <property type="project" value="RGD"/>
</dbReference>
<dbReference type="GO" id="GO:0005829">
    <property type="term" value="C:cytosol"/>
    <property type="evidence" value="ECO:0000318"/>
    <property type="project" value="GO_Central"/>
</dbReference>
<dbReference type="GO" id="GO:0005634">
    <property type="term" value="C:nucleus"/>
    <property type="evidence" value="ECO:0000318"/>
    <property type="project" value="GO_Central"/>
</dbReference>
<dbReference type="GO" id="GO:0005504">
    <property type="term" value="F:fatty acid binding"/>
    <property type="evidence" value="ECO:0000318"/>
    <property type="project" value="GO_Central"/>
</dbReference>
<dbReference type="GO" id="GO:0016918">
    <property type="term" value="F:retinal binding"/>
    <property type="evidence" value="ECO:0007669"/>
    <property type="project" value="UniProtKB-KW"/>
</dbReference>
<dbReference type="GO" id="GO:0001972">
    <property type="term" value="F:retinoic acid binding"/>
    <property type="evidence" value="ECO:0000314"/>
    <property type="project" value="RGD"/>
</dbReference>
<dbReference type="GO" id="GO:0019841">
    <property type="term" value="F:retinol binding"/>
    <property type="evidence" value="ECO:0007669"/>
    <property type="project" value="UniProtKB-KW"/>
</dbReference>
<dbReference type="GO" id="GO:0015908">
    <property type="term" value="P:fatty acid transport"/>
    <property type="evidence" value="ECO:0000318"/>
    <property type="project" value="GO_Central"/>
</dbReference>
<dbReference type="CDD" id="cd19460">
    <property type="entry name" value="CRABP1"/>
    <property type="match status" value="1"/>
</dbReference>
<dbReference type="FunFam" id="2.40.128.20:FF:000001">
    <property type="entry name" value="Fatty acid-binding protein, adipocyte"/>
    <property type="match status" value="1"/>
</dbReference>
<dbReference type="Gene3D" id="2.40.128.20">
    <property type="match status" value="1"/>
</dbReference>
<dbReference type="InterPro" id="IPR012674">
    <property type="entry name" value="Calycin"/>
</dbReference>
<dbReference type="InterPro" id="IPR000463">
    <property type="entry name" value="Fatty_acid-bd"/>
</dbReference>
<dbReference type="InterPro" id="IPR031259">
    <property type="entry name" value="ILBP"/>
</dbReference>
<dbReference type="InterPro" id="IPR000566">
    <property type="entry name" value="Lipocln_cytosolic_FA-bd_dom"/>
</dbReference>
<dbReference type="PANTHER" id="PTHR11955">
    <property type="entry name" value="FATTY ACID BINDING PROTEIN"/>
    <property type="match status" value="1"/>
</dbReference>
<dbReference type="Pfam" id="PF00061">
    <property type="entry name" value="Lipocalin"/>
    <property type="match status" value="1"/>
</dbReference>
<dbReference type="PRINTS" id="PR00178">
    <property type="entry name" value="FATTYACIDBP"/>
</dbReference>
<dbReference type="SUPFAM" id="SSF50814">
    <property type="entry name" value="Lipocalins"/>
    <property type="match status" value="1"/>
</dbReference>
<dbReference type="PROSITE" id="PS00214">
    <property type="entry name" value="FABP"/>
    <property type="match status" value="1"/>
</dbReference>
<keyword id="KW-0963">Cytoplasm</keyword>
<keyword id="KW-0903">Direct protein sequencing</keyword>
<keyword id="KW-1185">Reference proteome</keyword>
<keyword id="KW-0683">Retinol-binding</keyword>
<keyword id="KW-0813">Transport</keyword>
<keyword id="KW-0845">Vitamin A</keyword>
<accession>P62966</accession>
<accession>P02695</accession>
<accession>P02697</accession>
<accession>P15780</accession>
<name>RABP1_RAT</name>
<proteinExistence type="evidence at protein level"/>